<sequence>MAETDPKTMQDITLVVETLLQQMQDKFQIMSDQIIGRIDDMSSRIDDLEKNIADLMTQAGVEELDPENKIPTAQKS</sequence>
<protein>
    <recommendedName>
        <fullName>Heat shock factor-binding protein 1</fullName>
    </recommendedName>
</protein>
<organism>
    <name type="scientific">Mus musculus</name>
    <name type="common">Mouse</name>
    <dbReference type="NCBI Taxonomy" id="10090"/>
    <lineage>
        <taxon>Eukaryota</taxon>
        <taxon>Metazoa</taxon>
        <taxon>Chordata</taxon>
        <taxon>Craniata</taxon>
        <taxon>Vertebrata</taxon>
        <taxon>Euteleostomi</taxon>
        <taxon>Mammalia</taxon>
        <taxon>Eutheria</taxon>
        <taxon>Euarchontoglires</taxon>
        <taxon>Glires</taxon>
        <taxon>Rodentia</taxon>
        <taxon>Myomorpha</taxon>
        <taxon>Muroidea</taxon>
        <taxon>Muridae</taxon>
        <taxon>Murinae</taxon>
        <taxon>Mus</taxon>
        <taxon>Mus</taxon>
    </lineage>
</organism>
<name>HSBP1_MOUSE</name>
<comment type="function">
    <text evidence="1">Negative regulator of the heat shock response. Negatively affects HSF1 DNA-binding activity. May have a role in the suppression of the activation of the stress response during the aging process (By similarity).</text>
</comment>
<comment type="subunit">
    <text evidence="1">Homohexamer. Associates with heptad repeats of HSF1 trimers and probably also HSF1 monomers, and with HSP70. Association with HSF1 trimers and HSP70 coincides with attenuation of heat shock response and the conversion of HSF1 trimer to monomer (By similarity).</text>
</comment>
<comment type="subcellular location">
    <subcellularLocation>
        <location evidence="1">Nucleus</location>
    </subcellularLocation>
</comment>
<comment type="similarity">
    <text evidence="2">Belongs to the HSBP1 family.</text>
</comment>
<gene>
    <name type="primary">Hsbp1</name>
</gene>
<dbReference type="EMBL" id="AK010939">
    <property type="protein sequence ID" value="BAB27281.1"/>
    <property type="molecule type" value="mRNA"/>
</dbReference>
<dbReference type="EMBL" id="AK018708">
    <property type="protein sequence ID" value="BAB31359.1"/>
    <property type="molecule type" value="mRNA"/>
</dbReference>
<dbReference type="EMBL" id="AK050550">
    <property type="protein sequence ID" value="BAC34319.1"/>
    <property type="molecule type" value="mRNA"/>
</dbReference>
<dbReference type="EMBL" id="AK078498">
    <property type="protein sequence ID" value="BAC37310.1"/>
    <property type="molecule type" value="mRNA"/>
</dbReference>
<dbReference type="EMBL" id="AK145940">
    <property type="protein sequence ID" value="BAE26770.1"/>
    <property type="molecule type" value="mRNA"/>
</dbReference>
<dbReference type="EMBL" id="BC002153">
    <property type="protein sequence ID" value="AAH02153.1"/>
    <property type="molecule type" value="mRNA"/>
</dbReference>
<dbReference type="CCDS" id="CCDS40492.1"/>
<dbReference type="RefSeq" id="NP_077181.1">
    <property type="nucleotide sequence ID" value="NM_024219.1"/>
</dbReference>
<dbReference type="SMR" id="Q9CQZ1"/>
<dbReference type="BioGRID" id="212721">
    <property type="interactions" value="8"/>
</dbReference>
<dbReference type="FunCoup" id="Q9CQZ1">
    <property type="interactions" value="1715"/>
</dbReference>
<dbReference type="IntAct" id="Q9CQZ1">
    <property type="interactions" value="1"/>
</dbReference>
<dbReference type="STRING" id="10090.ENSMUSP00000034300"/>
<dbReference type="iPTMnet" id="Q9CQZ1"/>
<dbReference type="PhosphoSitePlus" id="Q9CQZ1"/>
<dbReference type="jPOST" id="Q9CQZ1"/>
<dbReference type="PaxDb" id="10090-ENSMUSP00000034300"/>
<dbReference type="PeptideAtlas" id="Q9CQZ1"/>
<dbReference type="ProteomicsDB" id="267167"/>
<dbReference type="Pumba" id="Q9CQZ1"/>
<dbReference type="TopDownProteomics" id="Q9CQZ1"/>
<dbReference type="Antibodypedia" id="30517">
    <property type="antibodies" value="109 antibodies from 24 providers"/>
</dbReference>
<dbReference type="DNASU" id="68196"/>
<dbReference type="Ensembl" id="ENSMUST00000034300.8">
    <property type="protein sequence ID" value="ENSMUSP00000034300.7"/>
    <property type="gene ID" value="ENSMUSG00000031839.8"/>
</dbReference>
<dbReference type="Ensembl" id="ENSMUST00000212468.2">
    <property type="protein sequence ID" value="ENSMUSP00000148390.2"/>
    <property type="gene ID" value="ENSMUSG00000031839.8"/>
</dbReference>
<dbReference type="GeneID" id="68196"/>
<dbReference type="KEGG" id="mmu:68196"/>
<dbReference type="UCSC" id="uc009npm.1">
    <property type="organism name" value="mouse"/>
</dbReference>
<dbReference type="AGR" id="MGI:1915446"/>
<dbReference type="CTD" id="3281"/>
<dbReference type="MGI" id="MGI:1915446">
    <property type="gene designation" value="Hsbp1"/>
</dbReference>
<dbReference type="VEuPathDB" id="HostDB:ENSMUSG00000031839"/>
<dbReference type="eggNOG" id="KOG4117">
    <property type="taxonomic scope" value="Eukaryota"/>
</dbReference>
<dbReference type="GeneTree" id="ENSGT00390000006293"/>
<dbReference type="HOGENOM" id="CLU_149552_2_0_1"/>
<dbReference type="InParanoid" id="Q9CQZ1"/>
<dbReference type="OMA" id="MERANMD"/>
<dbReference type="OrthoDB" id="4159489at2759"/>
<dbReference type="PhylomeDB" id="Q9CQZ1"/>
<dbReference type="TreeFam" id="TF314005"/>
<dbReference type="Reactome" id="R-MMU-3371568">
    <property type="pathway name" value="Attenuation phase"/>
</dbReference>
<dbReference type="Reactome" id="R-MMU-3371571">
    <property type="pathway name" value="HSF1-dependent transactivation"/>
</dbReference>
<dbReference type="BioGRID-ORCS" id="68196">
    <property type="hits" value="3 hits in 78 CRISPR screens"/>
</dbReference>
<dbReference type="ChiTaRS" id="Hsbp1">
    <property type="organism name" value="mouse"/>
</dbReference>
<dbReference type="PRO" id="PR:Q9CQZ1"/>
<dbReference type="Proteomes" id="UP000000589">
    <property type="component" value="Chromosome 8"/>
</dbReference>
<dbReference type="RNAct" id="Q9CQZ1">
    <property type="molecule type" value="protein"/>
</dbReference>
<dbReference type="Bgee" id="ENSMUSG00000031839">
    <property type="expression patterns" value="Expressed in seminiferous tubule of testis and 268 other cell types or tissues"/>
</dbReference>
<dbReference type="GO" id="GO:1904115">
    <property type="term" value="C:axon cytoplasm"/>
    <property type="evidence" value="ECO:0007669"/>
    <property type="project" value="GOC"/>
</dbReference>
<dbReference type="GO" id="GO:0005634">
    <property type="term" value="C:nucleus"/>
    <property type="evidence" value="ECO:0007669"/>
    <property type="project" value="UniProtKB-SubCell"/>
</dbReference>
<dbReference type="GO" id="GO:0042802">
    <property type="term" value="F:identical protein binding"/>
    <property type="evidence" value="ECO:0007669"/>
    <property type="project" value="Ensembl"/>
</dbReference>
<dbReference type="GO" id="GO:0003714">
    <property type="term" value="F:transcription corepressor activity"/>
    <property type="evidence" value="ECO:0007669"/>
    <property type="project" value="InterPro"/>
</dbReference>
<dbReference type="GO" id="GO:0019896">
    <property type="term" value="P:axonal transport of mitochondrion"/>
    <property type="evidence" value="ECO:0007669"/>
    <property type="project" value="Ensembl"/>
</dbReference>
<dbReference type="GO" id="GO:0035987">
    <property type="term" value="P:endodermal cell differentiation"/>
    <property type="evidence" value="ECO:0000315"/>
    <property type="project" value="MGI"/>
</dbReference>
<dbReference type="GO" id="GO:0006936">
    <property type="term" value="P:muscle contraction"/>
    <property type="evidence" value="ECO:0007669"/>
    <property type="project" value="Ensembl"/>
</dbReference>
<dbReference type="FunFam" id="1.20.5.430:FF:000002">
    <property type="entry name" value="Heat shock factor-binding protein 1"/>
    <property type="match status" value="1"/>
</dbReference>
<dbReference type="Gene3D" id="1.20.5.430">
    <property type="match status" value="1"/>
</dbReference>
<dbReference type="InterPro" id="IPR009643">
    <property type="entry name" value="HS1-bd"/>
</dbReference>
<dbReference type="PANTHER" id="PTHR19424">
    <property type="entry name" value="HEAT SHOCK FACTOR BINDING PROTEIN 1"/>
    <property type="match status" value="1"/>
</dbReference>
<dbReference type="PANTHER" id="PTHR19424:SF3">
    <property type="entry name" value="HEAT SHOCK FACTOR-BINDING PROTEIN 1"/>
    <property type="match status" value="1"/>
</dbReference>
<dbReference type="Pfam" id="PF06825">
    <property type="entry name" value="HSBP1"/>
    <property type="match status" value="1"/>
</dbReference>
<keyword id="KW-0539">Nucleus</keyword>
<keyword id="KW-1185">Reference proteome</keyword>
<feature type="chain" id="PRO_0000124806" description="Heat shock factor-binding protein 1">
    <location>
        <begin position="1"/>
        <end position="76"/>
    </location>
</feature>
<evidence type="ECO:0000250" key="1"/>
<evidence type="ECO:0000305" key="2"/>
<proteinExistence type="evidence at protein level"/>
<reference key="1">
    <citation type="journal article" date="2005" name="Science">
        <title>The transcriptional landscape of the mammalian genome.</title>
        <authorList>
            <person name="Carninci P."/>
            <person name="Kasukawa T."/>
            <person name="Katayama S."/>
            <person name="Gough J."/>
            <person name="Frith M.C."/>
            <person name="Maeda N."/>
            <person name="Oyama R."/>
            <person name="Ravasi T."/>
            <person name="Lenhard B."/>
            <person name="Wells C."/>
            <person name="Kodzius R."/>
            <person name="Shimokawa K."/>
            <person name="Bajic V.B."/>
            <person name="Brenner S.E."/>
            <person name="Batalov S."/>
            <person name="Forrest A.R."/>
            <person name="Zavolan M."/>
            <person name="Davis M.J."/>
            <person name="Wilming L.G."/>
            <person name="Aidinis V."/>
            <person name="Allen J.E."/>
            <person name="Ambesi-Impiombato A."/>
            <person name="Apweiler R."/>
            <person name="Aturaliya R.N."/>
            <person name="Bailey T.L."/>
            <person name="Bansal M."/>
            <person name="Baxter L."/>
            <person name="Beisel K.W."/>
            <person name="Bersano T."/>
            <person name="Bono H."/>
            <person name="Chalk A.M."/>
            <person name="Chiu K.P."/>
            <person name="Choudhary V."/>
            <person name="Christoffels A."/>
            <person name="Clutterbuck D.R."/>
            <person name="Crowe M.L."/>
            <person name="Dalla E."/>
            <person name="Dalrymple B.P."/>
            <person name="de Bono B."/>
            <person name="Della Gatta G."/>
            <person name="di Bernardo D."/>
            <person name="Down T."/>
            <person name="Engstrom P."/>
            <person name="Fagiolini M."/>
            <person name="Faulkner G."/>
            <person name="Fletcher C.F."/>
            <person name="Fukushima T."/>
            <person name="Furuno M."/>
            <person name="Futaki S."/>
            <person name="Gariboldi M."/>
            <person name="Georgii-Hemming P."/>
            <person name="Gingeras T.R."/>
            <person name="Gojobori T."/>
            <person name="Green R.E."/>
            <person name="Gustincich S."/>
            <person name="Harbers M."/>
            <person name="Hayashi Y."/>
            <person name="Hensch T.K."/>
            <person name="Hirokawa N."/>
            <person name="Hill D."/>
            <person name="Huminiecki L."/>
            <person name="Iacono M."/>
            <person name="Ikeo K."/>
            <person name="Iwama A."/>
            <person name="Ishikawa T."/>
            <person name="Jakt M."/>
            <person name="Kanapin A."/>
            <person name="Katoh M."/>
            <person name="Kawasawa Y."/>
            <person name="Kelso J."/>
            <person name="Kitamura H."/>
            <person name="Kitano H."/>
            <person name="Kollias G."/>
            <person name="Krishnan S.P."/>
            <person name="Kruger A."/>
            <person name="Kummerfeld S.K."/>
            <person name="Kurochkin I.V."/>
            <person name="Lareau L.F."/>
            <person name="Lazarevic D."/>
            <person name="Lipovich L."/>
            <person name="Liu J."/>
            <person name="Liuni S."/>
            <person name="McWilliam S."/>
            <person name="Madan Babu M."/>
            <person name="Madera M."/>
            <person name="Marchionni L."/>
            <person name="Matsuda H."/>
            <person name="Matsuzawa S."/>
            <person name="Miki H."/>
            <person name="Mignone F."/>
            <person name="Miyake S."/>
            <person name="Morris K."/>
            <person name="Mottagui-Tabar S."/>
            <person name="Mulder N."/>
            <person name="Nakano N."/>
            <person name="Nakauchi H."/>
            <person name="Ng P."/>
            <person name="Nilsson R."/>
            <person name="Nishiguchi S."/>
            <person name="Nishikawa S."/>
            <person name="Nori F."/>
            <person name="Ohara O."/>
            <person name="Okazaki Y."/>
            <person name="Orlando V."/>
            <person name="Pang K.C."/>
            <person name="Pavan W.J."/>
            <person name="Pavesi G."/>
            <person name="Pesole G."/>
            <person name="Petrovsky N."/>
            <person name="Piazza S."/>
            <person name="Reed J."/>
            <person name="Reid J.F."/>
            <person name="Ring B.Z."/>
            <person name="Ringwald M."/>
            <person name="Rost B."/>
            <person name="Ruan Y."/>
            <person name="Salzberg S.L."/>
            <person name="Sandelin A."/>
            <person name="Schneider C."/>
            <person name="Schoenbach C."/>
            <person name="Sekiguchi K."/>
            <person name="Semple C.A."/>
            <person name="Seno S."/>
            <person name="Sessa L."/>
            <person name="Sheng Y."/>
            <person name="Shibata Y."/>
            <person name="Shimada H."/>
            <person name="Shimada K."/>
            <person name="Silva D."/>
            <person name="Sinclair B."/>
            <person name="Sperling S."/>
            <person name="Stupka E."/>
            <person name="Sugiura K."/>
            <person name="Sultana R."/>
            <person name="Takenaka Y."/>
            <person name="Taki K."/>
            <person name="Tammoja K."/>
            <person name="Tan S.L."/>
            <person name="Tang S."/>
            <person name="Taylor M.S."/>
            <person name="Tegner J."/>
            <person name="Teichmann S.A."/>
            <person name="Ueda H.R."/>
            <person name="van Nimwegen E."/>
            <person name="Verardo R."/>
            <person name="Wei C.L."/>
            <person name="Yagi K."/>
            <person name="Yamanishi H."/>
            <person name="Zabarovsky E."/>
            <person name="Zhu S."/>
            <person name="Zimmer A."/>
            <person name="Hide W."/>
            <person name="Bult C."/>
            <person name="Grimmond S.M."/>
            <person name="Teasdale R.D."/>
            <person name="Liu E.T."/>
            <person name="Brusic V."/>
            <person name="Quackenbush J."/>
            <person name="Wahlestedt C."/>
            <person name="Mattick J.S."/>
            <person name="Hume D.A."/>
            <person name="Kai C."/>
            <person name="Sasaki D."/>
            <person name="Tomaru Y."/>
            <person name="Fukuda S."/>
            <person name="Kanamori-Katayama M."/>
            <person name="Suzuki M."/>
            <person name="Aoki J."/>
            <person name="Arakawa T."/>
            <person name="Iida J."/>
            <person name="Imamura K."/>
            <person name="Itoh M."/>
            <person name="Kato T."/>
            <person name="Kawaji H."/>
            <person name="Kawagashira N."/>
            <person name="Kawashima T."/>
            <person name="Kojima M."/>
            <person name="Kondo S."/>
            <person name="Konno H."/>
            <person name="Nakano K."/>
            <person name="Ninomiya N."/>
            <person name="Nishio T."/>
            <person name="Okada M."/>
            <person name="Plessy C."/>
            <person name="Shibata K."/>
            <person name="Shiraki T."/>
            <person name="Suzuki S."/>
            <person name="Tagami M."/>
            <person name="Waki K."/>
            <person name="Watahiki A."/>
            <person name="Okamura-Oho Y."/>
            <person name="Suzuki H."/>
            <person name="Kawai J."/>
            <person name="Hayashizaki Y."/>
        </authorList>
    </citation>
    <scope>NUCLEOTIDE SEQUENCE [LARGE SCALE MRNA]</scope>
    <source>
        <strain>C57BL/6J</strain>
        <tissue>Kidney</tissue>
        <tissue>Liver</tissue>
        <tissue>Pancreas</tissue>
        <tissue>Placenta</tissue>
    </source>
</reference>
<reference key="2">
    <citation type="journal article" date="2004" name="Genome Res.">
        <title>The status, quality, and expansion of the NIH full-length cDNA project: the Mammalian Gene Collection (MGC).</title>
        <authorList>
            <consortium name="The MGC Project Team"/>
        </authorList>
    </citation>
    <scope>NUCLEOTIDE SEQUENCE [LARGE SCALE MRNA]</scope>
    <source>
        <strain>FVB/N</strain>
        <tissue>Mammary gland</tissue>
    </source>
</reference>
<reference key="3">
    <citation type="journal article" date="2010" name="Cell">
        <title>A tissue-specific atlas of mouse protein phosphorylation and expression.</title>
        <authorList>
            <person name="Huttlin E.L."/>
            <person name="Jedrychowski M.P."/>
            <person name="Elias J.E."/>
            <person name="Goswami T."/>
            <person name="Rad R."/>
            <person name="Beausoleil S.A."/>
            <person name="Villen J."/>
            <person name="Haas W."/>
            <person name="Sowa M.E."/>
            <person name="Gygi S.P."/>
        </authorList>
    </citation>
    <scope>IDENTIFICATION BY MASS SPECTROMETRY [LARGE SCALE ANALYSIS]</scope>
    <source>
        <tissue>Brain</tissue>
        <tissue>Kidney</tissue>
        <tissue>Testis</tissue>
    </source>
</reference>
<accession>Q9CQZ1</accession>
<accession>Q3UKN1</accession>